<gene>
    <name type="primary">dnaE</name>
    <name type="ordered locus">SAS1630</name>
</gene>
<reference key="1">
    <citation type="journal article" date="2004" name="Proc. Natl. Acad. Sci. U.S.A.">
        <title>Complete genomes of two clinical Staphylococcus aureus strains: evidence for the rapid evolution of virulence and drug resistance.</title>
        <authorList>
            <person name="Holden M.T.G."/>
            <person name="Feil E.J."/>
            <person name="Lindsay J.A."/>
            <person name="Peacock S.J."/>
            <person name="Day N.P.J."/>
            <person name="Enright M.C."/>
            <person name="Foster T.J."/>
            <person name="Moore C.E."/>
            <person name="Hurst L."/>
            <person name="Atkin R."/>
            <person name="Barron A."/>
            <person name="Bason N."/>
            <person name="Bentley S.D."/>
            <person name="Chillingworth C."/>
            <person name="Chillingworth T."/>
            <person name="Churcher C."/>
            <person name="Clark L."/>
            <person name="Corton C."/>
            <person name="Cronin A."/>
            <person name="Doggett J."/>
            <person name="Dowd L."/>
            <person name="Feltwell T."/>
            <person name="Hance Z."/>
            <person name="Harris B."/>
            <person name="Hauser H."/>
            <person name="Holroyd S."/>
            <person name="Jagels K."/>
            <person name="James K.D."/>
            <person name="Lennard N."/>
            <person name="Line A."/>
            <person name="Mayes R."/>
            <person name="Moule S."/>
            <person name="Mungall K."/>
            <person name="Ormond D."/>
            <person name="Quail M.A."/>
            <person name="Rabbinowitsch E."/>
            <person name="Rutherford K.M."/>
            <person name="Sanders M."/>
            <person name="Sharp S."/>
            <person name="Simmonds M."/>
            <person name="Stevens K."/>
            <person name="Whitehead S."/>
            <person name="Barrell B.G."/>
            <person name="Spratt B.G."/>
            <person name="Parkhill J."/>
        </authorList>
    </citation>
    <scope>NUCLEOTIDE SEQUENCE [LARGE SCALE GENOMIC DNA]</scope>
    <source>
        <strain>MSSA476</strain>
    </source>
</reference>
<proteinExistence type="inferred from homology"/>
<keyword id="KW-0963">Cytoplasm</keyword>
<keyword id="KW-0235">DNA replication</keyword>
<keyword id="KW-0239">DNA-directed DNA polymerase</keyword>
<keyword id="KW-0548">Nucleotidyltransferase</keyword>
<keyword id="KW-0808">Transferase</keyword>
<name>DPO3A_STAAS</name>
<feature type="chain" id="PRO_0000103344" description="DNA polymerase III subunit alpha">
    <location>
        <begin position="1"/>
        <end position="1065"/>
    </location>
</feature>
<accession>Q6G8M4</accession>
<comment type="function">
    <text evidence="1">DNA polymerase III is a complex, multichain enzyme responsible for most of the replicative synthesis in bacteria. This DNA polymerase also exhibits 3' to 5' exonuclease activity. The alpha chain is the DNA polymerase (By similarity).</text>
</comment>
<comment type="catalytic activity">
    <reaction>
        <text>DNA(n) + a 2'-deoxyribonucleoside 5'-triphosphate = DNA(n+1) + diphosphate</text>
        <dbReference type="Rhea" id="RHEA:22508"/>
        <dbReference type="Rhea" id="RHEA-COMP:17339"/>
        <dbReference type="Rhea" id="RHEA-COMP:17340"/>
        <dbReference type="ChEBI" id="CHEBI:33019"/>
        <dbReference type="ChEBI" id="CHEBI:61560"/>
        <dbReference type="ChEBI" id="CHEBI:173112"/>
        <dbReference type="EC" id="2.7.7.7"/>
    </reaction>
</comment>
<comment type="subunit">
    <text evidence="1">DNA polymerase III contains a core (composed of alpha, epsilon and theta chains) that associates with a tau subunit. This core dimerizes to form the PolIII' complex. PolIII' associates with the gamma complex (composed of gamma, delta, delta', psi and chi chains) and with the beta chain to form the complete DNA polymerase III complex (By similarity).</text>
</comment>
<comment type="subcellular location">
    <subcellularLocation>
        <location evidence="1">Cytoplasm</location>
    </subcellularLocation>
</comment>
<comment type="similarity">
    <text evidence="2">Belongs to the DNA polymerase type-C family. DnaE subfamily.</text>
</comment>
<dbReference type="EC" id="2.7.7.7"/>
<dbReference type="EMBL" id="BX571857">
    <property type="protein sequence ID" value="CAG43432.1"/>
    <property type="molecule type" value="Genomic_DNA"/>
</dbReference>
<dbReference type="RefSeq" id="WP_000226910.1">
    <property type="nucleotide sequence ID" value="NC_002953.3"/>
</dbReference>
<dbReference type="SMR" id="Q6G8M4"/>
<dbReference type="KEGG" id="sas:SAS1630"/>
<dbReference type="HOGENOM" id="CLU_001600_0_0_9"/>
<dbReference type="GO" id="GO:0005737">
    <property type="term" value="C:cytoplasm"/>
    <property type="evidence" value="ECO:0007669"/>
    <property type="project" value="UniProtKB-SubCell"/>
</dbReference>
<dbReference type="GO" id="GO:0008408">
    <property type="term" value="F:3'-5' exonuclease activity"/>
    <property type="evidence" value="ECO:0007669"/>
    <property type="project" value="InterPro"/>
</dbReference>
<dbReference type="GO" id="GO:0003887">
    <property type="term" value="F:DNA-directed DNA polymerase activity"/>
    <property type="evidence" value="ECO:0007669"/>
    <property type="project" value="UniProtKB-KW"/>
</dbReference>
<dbReference type="GO" id="GO:0003676">
    <property type="term" value="F:nucleic acid binding"/>
    <property type="evidence" value="ECO:0007669"/>
    <property type="project" value="InterPro"/>
</dbReference>
<dbReference type="GO" id="GO:0006260">
    <property type="term" value="P:DNA replication"/>
    <property type="evidence" value="ECO:0007669"/>
    <property type="project" value="UniProtKB-KW"/>
</dbReference>
<dbReference type="CDD" id="cd04485">
    <property type="entry name" value="DnaE_OBF"/>
    <property type="match status" value="1"/>
</dbReference>
<dbReference type="CDD" id="cd07431">
    <property type="entry name" value="PHP_PolIIIA"/>
    <property type="match status" value="1"/>
</dbReference>
<dbReference type="Gene3D" id="1.10.150.870">
    <property type="match status" value="1"/>
</dbReference>
<dbReference type="Gene3D" id="1.10.10.1600">
    <property type="entry name" value="Bacterial DNA polymerase III alpha subunit, thumb domain"/>
    <property type="match status" value="1"/>
</dbReference>
<dbReference type="Gene3D" id="3.20.20.140">
    <property type="entry name" value="Metal-dependent hydrolases"/>
    <property type="match status" value="1"/>
</dbReference>
<dbReference type="InterPro" id="IPR011708">
    <property type="entry name" value="DNA_pol3_alpha_NTPase_dom"/>
</dbReference>
<dbReference type="InterPro" id="IPR041931">
    <property type="entry name" value="DNA_pol3_alpha_thumb_dom"/>
</dbReference>
<dbReference type="InterPro" id="IPR040982">
    <property type="entry name" value="DNA_pol3_finger"/>
</dbReference>
<dbReference type="InterPro" id="IPR004805">
    <property type="entry name" value="DnaE2/DnaE/PolC"/>
</dbReference>
<dbReference type="InterPro" id="IPR029460">
    <property type="entry name" value="DNAPol_HHH"/>
</dbReference>
<dbReference type="InterPro" id="IPR004365">
    <property type="entry name" value="NA-bd_OB_tRNA"/>
</dbReference>
<dbReference type="InterPro" id="IPR004013">
    <property type="entry name" value="PHP_dom"/>
</dbReference>
<dbReference type="InterPro" id="IPR003141">
    <property type="entry name" value="Pol/His_phosphatase_N"/>
</dbReference>
<dbReference type="InterPro" id="IPR016195">
    <property type="entry name" value="Pol/histidinol_Pase-like"/>
</dbReference>
<dbReference type="NCBIfam" id="TIGR00594">
    <property type="entry name" value="polc"/>
    <property type="match status" value="1"/>
</dbReference>
<dbReference type="PANTHER" id="PTHR32294">
    <property type="entry name" value="DNA POLYMERASE III SUBUNIT ALPHA"/>
    <property type="match status" value="1"/>
</dbReference>
<dbReference type="PANTHER" id="PTHR32294:SF0">
    <property type="entry name" value="DNA POLYMERASE III SUBUNIT ALPHA"/>
    <property type="match status" value="1"/>
</dbReference>
<dbReference type="Pfam" id="PF07733">
    <property type="entry name" value="DNA_pol3_alpha"/>
    <property type="match status" value="1"/>
</dbReference>
<dbReference type="Pfam" id="PF17657">
    <property type="entry name" value="DNA_pol3_finger"/>
    <property type="match status" value="1"/>
</dbReference>
<dbReference type="Pfam" id="PF14579">
    <property type="entry name" value="HHH_6"/>
    <property type="match status" value="1"/>
</dbReference>
<dbReference type="Pfam" id="PF02811">
    <property type="entry name" value="PHP"/>
    <property type="match status" value="1"/>
</dbReference>
<dbReference type="Pfam" id="PF01336">
    <property type="entry name" value="tRNA_anti-codon"/>
    <property type="match status" value="1"/>
</dbReference>
<dbReference type="SMART" id="SM00481">
    <property type="entry name" value="POLIIIAc"/>
    <property type="match status" value="1"/>
</dbReference>
<dbReference type="SUPFAM" id="SSF89550">
    <property type="entry name" value="PHP domain-like"/>
    <property type="match status" value="1"/>
</dbReference>
<protein>
    <recommendedName>
        <fullName>DNA polymerase III subunit alpha</fullName>
        <ecNumber>2.7.7.7</ecNumber>
    </recommendedName>
</protein>
<sequence length="1065" mass="122915">MVAYLNIHTAYDLLNSSLKIEDAVRLAVSENVDALAITDTNVLYGFPKFYDACIANNIKPIFGMTIYVTNGLNTVETVVLAKNNDGLKDLYQLSSEIKMNALEHVSFELLKRFSNNMIIIFKKVGDQHRDIVQVFETHNDTYMDHLSISIQGRKHVWIQNVCYQTRQDADTISALAAIRDNTKLDLIHDQEDFGAHFLTEKEINQLDINQEYLTQVDVIAQKCDAELKYHQSLLPQYETPNDESAKKYLWRVLVTQLKKLELNYDVYLERLKYEYKVITNMGFEDYFLIVSDLIHYAKTNDVMVGPGRGSSAGSLVSYLLGITTIDPIKFNLLFERFLNPERVTMPDIDIDFEDTRRERVIQYVQEKYGELHVSGIVTFGHLLARAVARDVGRIMGFDEVTLNEISSLIPHKLGITLDEAYQIDDFKKFVHRNHRHERWFSICKKLEGLPRHTSTHAAGIIINDHPLYEYAPLTKGDTGLLTQWTMTEAERIGLLKIDFLGLRNLSIIHQILTQVKKDLGINIDIEKIPFDDQKVFELLSQGDTTGIFQLESDGVRSVLKKLKPEHFEDIVAVTSLYRPGPMEEIPTYITRRHDPSKVQYLHPHLEPILKNTYGVIIYQEQIMQIASTFANFSYGEADILRRAMSKKNRAVLESERQHFIEGAKQNGYHEDISKQIFDLILKFADYGFPRAHAVSYSKIAYIMSFLKVHYPNYFYANILSNVIGSEKKTAQMIEEAKKQGITILPPNINESHWFYKPSQEGIYLSIGTIKGVGYQSVKVIVDERYQNGKFKDFFDFARRIPKRVKTRKLLEALILVGAFDAFGKTRSTLLQAIDQVLDGDLNIEQDGFLFDILTPKQMYEDKEELPDALISQYEKEYLGFYVSQHPVDKKFVAKQYLTIFKLSNAQNNKPILVQFDKVKQIRTKNGQNMAFVTLNDGIETLDGVIFPNQFKKYEELLSHNDLFIVSGKFDHRKQQRQLIINEIQTLATFEEQKLAFAKQIIIRNKSQIDMFEEMIKATKENANDVVLSFYDETIKQMTTLGYINQKDSMFNNFIQSFNPSDIRLI</sequence>
<evidence type="ECO:0000250" key="1"/>
<evidence type="ECO:0000305" key="2"/>
<organism>
    <name type="scientific">Staphylococcus aureus (strain MSSA476)</name>
    <dbReference type="NCBI Taxonomy" id="282459"/>
    <lineage>
        <taxon>Bacteria</taxon>
        <taxon>Bacillati</taxon>
        <taxon>Bacillota</taxon>
        <taxon>Bacilli</taxon>
        <taxon>Bacillales</taxon>
        <taxon>Staphylococcaceae</taxon>
        <taxon>Staphylococcus</taxon>
    </lineage>
</organism>